<accession>Q63357</accession>
<accession>Q5PQU2</accession>
<sequence>MAEQESLEFGKADFVLMDTVSMPEFMANLRLRFEKGRIYTFIGEVVVSVNPYKVLNIYGRDTIEQYKGRELYERPPHLFAIADAAYKAMKRRSKDTCIMISGESGAGKTEASKYIMQYIAAITNPSQRAEIERVKNMLLKSNCVLEAFGNAKTNRNDNSSRFGKYMDINFDFKGDPIGGHINNYLLEKSRVIVQQPGERSFHSFYQLLQGGSEQMLHSLHLQKSLSSYNYIRVGAQLKSSINDAAEFKVVADAMKVIGFKPEEIQTVYKILAAILHLGNLKFIVDGDTPLIENGKVVSVIAELLSTKADMVEKALLYRTVATGRDIIDKQHTEQEASYGRDAFAKAIYERLFCWIVTRINDIIEVKNYDTTVHGKNTVIGVLDIYGFEIFDNNSFEQFCINYCNEKLQQLFIQLVLKQEQEEYQREGIPWKHIDYFNNQIIVDLVEQQHKGIIAILDDACMNVGKVTDGMFLEALNSKLGKHGHFSSRKTCASDKILEFDRDFRIRHYAGDVVYSVIGFIDKNKDTLFQDFKRLMYNSSNPVLKNMWPEGKLSITEVTKRPLTAATLFKNSMIALVDNLASKEPYYVRCIKPNDKKSPQIFDDERCRHQVEYLGLLENVRVRRAGFAFRQTYEKFLHRYKMISEFTWPNHDLPSDKEAVKKLIERCGFQDDVAYGKTKIFIRTPRTLFTLEELRAQMLVRVVLFLQKVWRGTLARMRYKRTKAALTIIRYYRRYKVKSYIHEVARRFHGVKNMRDYGKHVKWPTPPKVLRRFEEALQSIFNRWRASQLIKTIPASDLPQVRAKVAAMEMLKGQRADLGLQRAWEGNYLASKPDTPQTSGTFVPVANELKRKDKYMNVLFSCHVRKVNRFSKVEDRAIFVTDRHLYKMDPTKQYKVMKTIPLYNLTGLSVSNGKDQLVVFHTKDNKDLIVCLFSKQPTHESRIGELVGVLVNHFKSEKRHLQVNVTNPVQCSLHGKKCTVSVETRLNQPQPDFTKNRSGFILSVPGN</sequence>
<evidence type="ECO:0000250" key="1">
    <source>
        <dbReference type="UniProtKB" id="F1PRN2"/>
    </source>
</evidence>
<evidence type="ECO:0000250" key="2">
    <source>
        <dbReference type="UniProtKB" id="O94832"/>
    </source>
</evidence>
<evidence type="ECO:0000250" key="3">
    <source>
        <dbReference type="UniProtKB" id="Q5SYD0"/>
    </source>
</evidence>
<evidence type="ECO:0000255" key="4">
    <source>
        <dbReference type="PROSITE-ProRule" id="PRU00116"/>
    </source>
</evidence>
<evidence type="ECO:0000255" key="5">
    <source>
        <dbReference type="PROSITE-ProRule" id="PRU00782"/>
    </source>
</evidence>
<evidence type="ECO:0000255" key="6">
    <source>
        <dbReference type="PROSITE-ProRule" id="PRU01093"/>
    </source>
</evidence>
<evidence type="ECO:0000269" key="7">
    <source>
    </source>
</evidence>
<evidence type="ECO:0000269" key="8">
    <source>
    </source>
</evidence>
<evidence type="ECO:0000269" key="9">
    <source>
    </source>
</evidence>
<evidence type="ECO:0000269" key="10">
    <source>
    </source>
</evidence>
<evidence type="ECO:0000269" key="11">
    <source>
    </source>
</evidence>
<evidence type="ECO:0000269" key="12">
    <source>
    </source>
</evidence>
<evidence type="ECO:0000303" key="13">
    <source>
    </source>
</evidence>
<evidence type="ECO:0000303" key="14">
    <source>
    </source>
</evidence>
<evidence type="ECO:0000305" key="15"/>
<evidence type="ECO:0000305" key="16">
    <source>
    </source>
</evidence>
<keyword id="KW-0007">Acetylation</keyword>
<keyword id="KW-0009">Actin-binding</keyword>
<keyword id="KW-0067">ATP-binding</keyword>
<keyword id="KW-0112">Calmodulin-binding</keyword>
<keyword id="KW-0966">Cell projection</keyword>
<keyword id="KW-0963">Cytoplasm</keyword>
<keyword id="KW-0967">Endosome</keyword>
<keyword id="KW-0505">Motor protein</keyword>
<keyword id="KW-0518">Myosin</keyword>
<keyword id="KW-0547">Nucleotide-binding</keyword>
<keyword id="KW-0597">Phosphoprotein</keyword>
<keyword id="KW-0653">Protein transport</keyword>
<keyword id="KW-1185">Reference proteome</keyword>
<keyword id="KW-0677">Repeat</keyword>
<keyword id="KW-0813">Transport</keyword>
<reference key="1">
    <citation type="journal article" date="1994" name="J. Cell Biol.">
        <title>Rat myr4 defines a novel subclass of myosin I: identification, distribution, localization, and mapping of calmodulin-binding sites with differential calcium sensitivity.</title>
        <authorList>
            <person name="Baehler M."/>
            <person name="Kroschewski R."/>
            <person name="Stoeffler H.E."/>
            <person name="Behrmann T."/>
        </authorList>
    </citation>
    <scope>NUCLEOTIDE SEQUENCE [MRNA]</scope>
    <scope>SUBUNIT</scope>
    <scope>SUBCELLULAR LOCATION</scope>
    <scope>DOMAIN</scope>
    <scope>TISSUE SPECIFICITY</scope>
    <scope>DEVELOPMENTAL STAGE</scope>
    <source>
        <strain>Sprague-Dawley</strain>
    </source>
</reference>
<reference key="2">
    <citation type="journal article" date="2004" name="Genome Res.">
        <title>The status, quality, and expansion of the NIH full-length cDNA project: the Mammalian Gene Collection (MGC).</title>
        <authorList>
            <consortium name="The MGC Project Team"/>
        </authorList>
    </citation>
    <scope>NUCLEOTIDE SEQUENCE [LARGE SCALE MRNA]</scope>
    <source>
        <tissue>Kidney</tissue>
    </source>
</reference>
<reference key="3">
    <citation type="journal article" date="2003" name="J. Cell Biol.">
        <title>Different degrees of lever arm rotation control myosin step size.</title>
        <authorList>
            <person name="Koehler D."/>
            <person name="Ruff C."/>
            <person name="Meyhoefer E."/>
            <person name="Baehler M."/>
        </authorList>
    </citation>
    <scope>FUNCTION</scope>
    <scope>INTERACTION WITH CALMODULIN</scope>
    <scope>DOMAIN</scope>
    <scope>ACTIN-BINDING</scope>
</reference>
<reference key="4">
    <citation type="journal article" date="2005" name="FEBS J.">
        <title>The two IQ-motifs and Ca2+/calmodulin regulate the rat myosin 1d ATPase activity.</title>
        <authorList>
            <person name="Koehler D."/>
            <person name="Struchholz S."/>
            <person name="Baehler M."/>
        </authorList>
    </citation>
    <scope>FUNCTION</scope>
    <scope>DOMAIN</scope>
    <scope>INTERACTION WITH CALMODULIN</scope>
    <scope>ACTIN-BINDING</scope>
</reference>
<reference key="5">
    <citation type="journal article" date="2014" name="J. Neurosci. Res.">
        <title>Unconventional myosin ID is expressed in myelinating oligodendrocytes.</title>
        <authorList>
            <person name="Yamazaki R."/>
            <person name="Ishibashi T."/>
            <person name="Baba H."/>
            <person name="Yamaguchi Y."/>
        </authorList>
    </citation>
    <scope>TISSUE SPECIFICITY</scope>
    <scope>DEVELOPMENTAL STAGE</scope>
</reference>
<reference key="6">
    <citation type="journal article" date="2015" name="Cytoskeleton">
        <title>Myosin Id is required for planar cell polarity in ciliated tracheal and ependymal epithelial cells.</title>
        <authorList>
            <person name="Hegan P.S."/>
            <person name="Ostertag E."/>
            <person name="Geurts A.M."/>
            <person name="Mooseker M.S."/>
        </authorList>
    </citation>
    <scope>SUBCELLULAR LOCATION</scope>
    <scope>DISRUPTION PHENOTYPE</scope>
    <scope>TISSUE SPECIFICITY</scope>
</reference>
<reference key="7">
    <citation type="journal article" date="2018" name="Nat. Commun.">
        <title>Vertebrate myosin 1d regulates left-right organizer morphogenesis and laterality.</title>
        <authorList>
            <person name="Saydmohammed M."/>
            <person name="Yagi H."/>
            <person name="Calderon M."/>
            <person name="Clark M.J."/>
            <person name="Feinstein T."/>
            <person name="Sun M."/>
            <person name="Stolz D.B."/>
            <person name="Watkins S.C."/>
            <person name="Amack J.D."/>
            <person name="Lo C.W."/>
            <person name="Tsang M."/>
        </authorList>
    </citation>
    <scope>RESCUE OF KUPFFER'S VESICLE LUMEN SIZE AND ANTERIOR-POSTERIOR CELL MORPHOLOGY DEFECTS</scope>
    <scope>DOMAIN</scope>
</reference>
<dbReference type="EMBL" id="X71997">
    <property type="protein sequence ID" value="CAA50871.1"/>
    <property type="molecule type" value="mRNA"/>
</dbReference>
<dbReference type="EMBL" id="BC087027">
    <property type="protein sequence ID" value="AAH87027.1"/>
    <property type="molecule type" value="mRNA"/>
</dbReference>
<dbReference type="PIR" id="A53933">
    <property type="entry name" value="A53933"/>
</dbReference>
<dbReference type="RefSeq" id="NP_037115.2">
    <property type="nucleotide sequence ID" value="NM_012983.2"/>
</dbReference>
<dbReference type="SMR" id="Q63357"/>
<dbReference type="BioGRID" id="247518">
    <property type="interactions" value="3"/>
</dbReference>
<dbReference type="FunCoup" id="Q63357">
    <property type="interactions" value="1555"/>
</dbReference>
<dbReference type="IntAct" id="Q63357">
    <property type="interactions" value="1"/>
</dbReference>
<dbReference type="MINT" id="Q63357"/>
<dbReference type="STRING" id="10116.ENSRNOP00000004609"/>
<dbReference type="GlyGen" id="Q63357">
    <property type="glycosylation" value="1 site"/>
</dbReference>
<dbReference type="iPTMnet" id="Q63357"/>
<dbReference type="PhosphoSitePlus" id="Q63357"/>
<dbReference type="jPOST" id="Q63357"/>
<dbReference type="PaxDb" id="10116-ENSRNOP00000004609"/>
<dbReference type="Ensembl" id="ENSRNOT00000004609.5">
    <property type="protein sequence ID" value="ENSRNOP00000004609.3"/>
    <property type="gene ID" value="ENSRNOG00000003276.6"/>
</dbReference>
<dbReference type="GeneID" id="25485"/>
<dbReference type="KEGG" id="rno:25485"/>
<dbReference type="AGR" id="RGD:621321"/>
<dbReference type="CTD" id="4642"/>
<dbReference type="RGD" id="621321">
    <property type="gene designation" value="Myo1d"/>
</dbReference>
<dbReference type="eggNOG" id="KOG0164">
    <property type="taxonomic scope" value="Eukaryota"/>
</dbReference>
<dbReference type="GeneTree" id="ENSGT00940000157411"/>
<dbReference type="HOGENOM" id="CLU_000192_7_7_1"/>
<dbReference type="InParanoid" id="Q63357"/>
<dbReference type="OrthoDB" id="11105at9989"/>
<dbReference type="PhylomeDB" id="Q63357"/>
<dbReference type="TreeFam" id="TF312960"/>
<dbReference type="PRO" id="PR:Q63357"/>
<dbReference type="Proteomes" id="UP000002494">
    <property type="component" value="Chromosome 10"/>
</dbReference>
<dbReference type="Bgee" id="ENSRNOG00000003276">
    <property type="expression patterns" value="Expressed in jejunum and 19 other cell types or tissues"/>
</dbReference>
<dbReference type="GO" id="GO:0015629">
    <property type="term" value="C:actin cytoskeleton"/>
    <property type="evidence" value="ECO:0000318"/>
    <property type="project" value="GO_Central"/>
</dbReference>
<dbReference type="GO" id="GO:0097440">
    <property type="term" value="C:apical dendrite"/>
    <property type="evidence" value="ECO:0000314"/>
    <property type="project" value="UniProtKB"/>
</dbReference>
<dbReference type="GO" id="GO:0030673">
    <property type="term" value="C:axolemma"/>
    <property type="evidence" value="ECO:0000314"/>
    <property type="project" value="RGD"/>
</dbReference>
<dbReference type="GO" id="GO:0030424">
    <property type="term" value="C:axon"/>
    <property type="evidence" value="ECO:0000266"/>
    <property type="project" value="RGD"/>
</dbReference>
<dbReference type="GO" id="GO:0016323">
    <property type="term" value="C:basolateral plasma membrane"/>
    <property type="evidence" value="ECO:0000314"/>
    <property type="project" value="UniProtKB"/>
</dbReference>
<dbReference type="GO" id="GO:0005903">
    <property type="term" value="C:brush border"/>
    <property type="evidence" value="ECO:0000314"/>
    <property type="project" value="UniProtKB"/>
</dbReference>
<dbReference type="GO" id="GO:0005938">
    <property type="term" value="C:cell cortex"/>
    <property type="evidence" value="ECO:0007669"/>
    <property type="project" value="UniProtKB-SubCell"/>
</dbReference>
<dbReference type="GO" id="GO:0005737">
    <property type="term" value="C:cytoplasm"/>
    <property type="evidence" value="ECO:0000318"/>
    <property type="project" value="GO_Central"/>
</dbReference>
<dbReference type="GO" id="GO:0031410">
    <property type="term" value="C:cytoplasmic vesicle"/>
    <property type="evidence" value="ECO:0000314"/>
    <property type="project" value="UniProtKB"/>
</dbReference>
<dbReference type="GO" id="GO:0005769">
    <property type="term" value="C:early endosome"/>
    <property type="evidence" value="ECO:0007669"/>
    <property type="project" value="UniProtKB-SubCell"/>
</dbReference>
<dbReference type="GO" id="GO:0005768">
    <property type="term" value="C:endosome"/>
    <property type="evidence" value="ECO:0000266"/>
    <property type="project" value="RGD"/>
</dbReference>
<dbReference type="GO" id="GO:0005902">
    <property type="term" value="C:microvillus"/>
    <property type="evidence" value="ECO:0000318"/>
    <property type="project" value="GO_Central"/>
</dbReference>
<dbReference type="GO" id="GO:0043209">
    <property type="term" value="C:myelin sheath"/>
    <property type="evidence" value="ECO:0000314"/>
    <property type="project" value="UniProtKB"/>
</dbReference>
<dbReference type="GO" id="GO:0016459">
    <property type="term" value="C:myosin complex"/>
    <property type="evidence" value="ECO:0000314"/>
    <property type="project" value="RGD"/>
</dbReference>
<dbReference type="GO" id="GO:0043005">
    <property type="term" value="C:neuron projection"/>
    <property type="evidence" value="ECO:0000266"/>
    <property type="project" value="RGD"/>
</dbReference>
<dbReference type="GO" id="GO:0043025">
    <property type="term" value="C:neuronal cell body"/>
    <property type="evidence" value="ECO:0000314"/>
    <property type="project" value="UniProtKB"/>
</dbReference>
<dbReference type="GO" id="GO:0043204">
    <property type="term" value="C:perikaryon"/>
    <property type="evidence" value="ECO:0007669"/>
    <property type="project" value="UniProtKB-SubCell"/>
</dbReference>
<dbReference type="GO" id="GO:0005886">
    <property type="term" value="C:plasma membrane"/>
    <property type="evidence" value="ECO:0000318"/>
    <property type="project" value="GO_Central"/>
</dbReference>
<dbReference type="GO" id="GO:0044853">
    <property type="term" value="C:plasma membrane raft"/>
    <property type="evidence" value="ECO:0000314"/>
    <property type="project" value="UniProtKB"/>
</dbReference>
<dbReference type="GO" id="GO:0051015">
    <property type="term" value="F:actin filament binding"/>
    <property type="evidence" value="ECO:0000314"/>
    <property type="project" value="UniProtKB"/>
</dbReference>
<dbReference type="GO" id="GO:0005524">
    <property type="term" value="F:ATP binding"/>
    <property type="evidence" value="ECO:0007669"/>
    <property type="project" value="UniProtKB-KW"/>
</dbReference>
<dbReference type="GO" id="GO:0048306">
    <property type="term" value="F:calcium-dependent protein binding"/>
    <property type="evidence" value="ECO:0000314"/>
    <property type="project" value="RGD"/>
</dbReference>
<dbReference type="GO" id="GO:0005516">
    <property type="term" value="F:calmodulin binding"/>
    <property type="evidence" value="ECO:0000314"/>
    <property type="project" value="UniProtKB"/>
</dbReference>
<dbReference type="GO" id="GO:0000146">
    <property type="term" value="F:microfilament motor activity"/>
    <property type="evidence" value="ECO:0000314"/>
    <property type="project" value="UniProtKB"/>
</dbReference>
<dbReference type="GO" id="GO:0019904">
    <property type="term" value="F:protein domain specific binding"/>
    <property type="evidence" value="ECO:0000266"/>
    <property type="project" value="RGD"/>
</dbReference>
<dbReference type="GO" id="GO:0007015">
    <property type="term" value="P:actin filament organization"/>
    <property type="evidence" value="ECO:0000318"/>
    <property type="project" value="GO_Central"/>
</dbReference>
<dbReference type="GO" id="GO:0030048">
    <property type="term" value="P:actin filament-based movement"/>
    <property type="evidence" value="ECO:0000318"/>
    <property type="project" value="GO_Central"/>
</dbReference>
<dbReference type="GO" id="GO:0061502">
    <property type="term" value="P:early endosome to recycling endosome transport"/>
    <property type="evidence" value="ECO:0000266"/>
    <property type="project" value="RGD"/>
</dbReference>
<dbReference type="GO" id="GO:0006897">
    <property type="term" value="P:endocytosis"/>
    <property type="evidence" value="ECO:0000318"/>
    <property type="project" value="GO_Central"/>
</dbReference>
<dbReference type="GO" id="GO:0030900">
    <property type="term" value="P:forebrain development"/>
    <property type="evidence" value="ECO:0000270"/>
    <property type="project" value="RGD"/>
</dbReference>
<dbReference type="GO" id="GO:0015031">
    <property type="term" value="P:protein transport"/>
    <property type="evidence" value="ECO:0007669"/>
    <property type="project" value="UniProtKB-KW"/>
</dbReference>
<dbReference type="CDD" id="cd01378">
    <property type="entry name" value="MYSc_Myo1"/>
    <property type="match status" value="1"/>
</dbReference>
<dbReference type="FunFam" id="1.20.5.4820:FF:000003">
    <property type="entry name" value="Unconventional myosin ID"/>
    <property type="match status" value="1"/>
</dbReference>
<dbReference type="FunFam" id="1.20.58.530:FF:000004">
    <property type="entry name" value="Unconventional myosin ID"/>
    <property type="match status" value="1"/>
</dbReference>
<dbReference type="FunFam" id="1.20.120.720:FF:000009">
    <property type="entry name" value="Unconventional myosin-Id"/>
    <property type="match status" value="1"/>
</dbReference>
<dbReference type="FunFam" id="1.10.10.820:FF:000007">
    <property type="entry name" value="unconventional myosin-Id"/>
    <property type="match status" value="1"/>
</dbReference>
<dbReference type="Gene3D" id="1.10.10.820">
    <property type="match status" value="1"/>
</dbReference>
<dbReference type="Gene3D" id="1.20.5.4820">
    <property type="match status" value="1"/>
</dbReference>
<dbReference type="Gene3D" id="1.20.58.530">
    <property type="match status" value="1"/>
</dbReference>
<dbReference type="Gene3D" id="3.40.850.10">
    <property type="entry name" value="Kinesin motor domain"/>
    <property type="match status" value="1"/>
</dbReference>
<dbReference type="Gene3D" id="1.20.120.720">
    <property type="entry name" value="Myosin VI head, motor domain, U50 subdomain"/>
    <property type="match status" value="1"/>
</dbReference>
<dbReference type="InterPro" id="IPR000048">
    <property type="entry name" value="IQ_motif_EF-hand-BS"/>
</dbReference>
<dbReference type="InterPro" id="IPR036961">
    <property type="entry name" value="Kinesin_motor_dom_sf"/>
</dbReference>
<dbReference type="InterPro" id="IPR001609">
    <property type="entry name" value="Myosin_head_motor_dom-like"/>
</dbReference>
<dbReference type="InterPro" id="IPR010926">
    <property type="entry name" value="Myosin_TH1"/>
</dbReference>
<dbReference type="InterPro" id="IPR036072">
    <property type="entry name" value="MYSc_Myo1"/>
</dbReference>
<dbReference type="InterPro" id="IPR027417">
    <property type="entry name" value="P-loop_NTPase"/>
</dbReference>
<dbReference type="PANTHER" id="PTHR13140">
    <property type="entry name" value="MYOSIN"/>
    <property type="match status" value="1"/>
</dbReference>
<dbReference type="PANTHER" id="PTHR13140:SF417">
    <property type="entry name" value="UNCONVENTIONAL MYOSIN-ID"/>
    <property type="match status" value="1"/>
</dbReference>
<dbReference type="Pfam" id="PF00612">
    <property type="entry name" value="IQ"/>
    <property type="match status" value="1"/>
</dbReference>
<dbReference type="Pfam" id="PF00063">
    <property type="entry name" value="Myosin_head"/>
    <property type="match status" value="1"/>
</dbReference>
<dbReference type="Pfam" id="PF06017">
    <property type="entry name" value="Myosin_TH1"/>
    <property type="match status" value="1"/>
</dbReference>
<dbReference type="PRINTS" id="PR00193">
    <property type="entry name" value="MYOSINHEAVY"/>
</dbReference>
<dbReference type="SMART" id="SM00015">
    <property type="entry name" value="IQ"/>
    <property type="match status" value="1"/>
</dbReference>
<dbReference type="SMART" id="SM00242">
    <property type="entry name" value="MYSc"/>
    <property type="match status" value="1"/>
</dbReference>
<dbReference type="SUPFAM" id="SSF52540">
    <property type="entry name" value="P-loop containing nucleoside triphosphate hydrolases"/>
    <property type="match status" value="1"/>
</dbReference>
<dbReference type="PROSITE" id="PS50096">
    <property type="entry name" value="IQ"/>
    <property type="match status" value="1"/>
</dbReference>
<dbReference type="PROSITE" id="PS51456">
    <property type="entry name" value="MYOSIN_MOTOR"/>
    <property type="match status" value="1"/>
</dbReference>
<dbReference type="PROSITE" id="PS51757">
    <property type="entry name" value="TH1"/>
    <property type="match status" value="1"/>
</dbReference>
<proteinExistence type="evidence at protein level"/>
<organism>
    <name type="scientific">Rattus norvegicus</name>
    <name type="common">Rat</name>
    <dbReference type="NCBI Taxonomy" id="10116"/>
    <lineage>
        <taxon>Eukaryota</taxon>
        <taxon>Metazoa</taxon>
        <taxon>Chordata</taxon>
        <taxon>Craniata</taxon>
        <taxon>Vertebrata</taxon>
        <taxon>Euteleostomi</taxon>
        <taxon>Mammalia</taxon>
        <taxon>Eutheria</taxon>
        <taxon>Euarchontoglires</taxon>
        <taxon>Glires</taxon>
        <taxon>Rodentia</taxon>
        <taxon>Myomorpha</taxon>
        <taxon>Muroidea</taxon>
        <taxon>Muridae</taxon>
        <taxon>Murinae</taxon>
        <taxon>Rattus</taxon>
    </lineage>
</organism>
<feature type="initiator methionine" description="Removed" evidence="2">
    <location>
        <position position="1"/>
    </location>
</feature>
<feature type="chain" id="PRO_0000123449" description="Unconventional myosin-Id">
    <location>
        <begin position="2"/>
        <end position="1006"/>
    </location>
</feature>
<feature type="domain" description="Myosin motor" evidence="5">
    <location>
        <begin position="9"/>
        <end position="695"/>
    </location>
</feature>
<feature type="domain" description="IQ 1" evidence="4 16">
    <location>
        <begin position="699"/>
        <end position="719"/>
    </location>
</feature>
<feature type="domain" description="IQ 2" evidence="4 16">
    <location>
        <begin position="721"/>
        <end position="741"/>
    </location>
</feature>
<feature type="domain" description="TH1" evidence="6">
    <location>
        <begin position="812"/>
        <end position="1005"/>
    </location>
</feature>
<feature type="region of interest" description="Actin-binding" evidence="5">
    <location>
        <begin position="572"/>
        <end position="594"/>
    </location>
</feature>
<feature type="region of interest" description="Interaction with calmodulin" evidence="12">
    <location>
        <begin position="776"/>
        <end position="896"/>
    </location>
</feature>
<feature type="binding site" evidence="5">
    <location>
        <begin position="102"/>
        <end position="109"/>
    </location>
    <ligand>
        <name>ATP</name>
        <dbReference type="ChEBI" id="CHEBI:30616"/>
    </ligand>
</feature>
<feature type="modified residue" description="N-acetylalanine" evidence="2">
    <location>
        <position position="2"/>
    </location>
</feature>
<feature type="modified residue" description="Phosphoserine" evidence="2">
    <location>
        <position position="200"/>
    </location>
</feature>
<feature type="modified residue" description="Phosphotyrosine" evidence="3">
    <location>
        <position position="536"/>
    </location>
</feature>
<feature type="sequence conflict" description="In Ref. 1; CAA50871." evidence="15" ref="1">
    <original>A</original>
    <variation>L</variation>
    <location>
        <position position="82"/>
    </location>
</feature>
<name>MYO1D_RAT</name>
<comment type="function">
    <text evidence="1 7 8 10">Unconventional myosin that functions as actin-based motor protein with ATPase activity (PubMed:12719468, PubMed:15853803). Plays a role in endosomal protein trafficking, and especially in the transfer of cargo proteins from early to recycling endosomes (By similarity). Required for normal planar cell polarity in ciliated tracheal cells, for normal rotational polarity of cilia, and for coordinated, unidirectional ciliary movement in the trachea. Required for normal, polarized cilia organization in brain ependymal epithelial cells (PubMed:26446290).</text>
</comment>
<comment type="subunit">
    <text evidence="7 8 12">Interacts (via the two IQ motifs) with calmodulin (PubMed:12719468, PubMed:15853803, PubMed:8034741). Binds an additional calmodulin chain via a third, C-terminal region (PubMed:8034741). Interacts with F-actin (PubMed:12719468, PubMed:15853803).</text>
</comment>
<comment type="subcellular location">
    <subcellularLocation>
        <location evidence="9 12">Cytoplasm</location>
    </subcellularLocation>
    <subcellularLocation>
        <location evidence="12">Perikaryon</location>
    </subcellularLocation>
    <subcellularLocation>
        <location evidence="12">Cell projection</location>
        <location evidence="12">Dendrite</location>
    </subcellularLocation>
    <subcellularLocation>
        <location evidence="1">Early endosome</location>
    </subcellularLocation>
    <subcellularLocation>
        <location evidence="10">Cytoplasm</location>
        <location evidence="10">Cell cortex</location>
    </subcellularLocation>
    <text evidence="10 12">Colocalizes with the actin cytoskeleton in the cell cortex close to the apical cell membrane (PubMed:26446290). Colocalizes with cytoplasmic puncta that are reminiscent of transport vesicles (PubMed:8034741).</text>
</comment>
<comment type="tissue specificity">
    <text evidence="9 10 12">Detected on tracheal epithelial cells, and on epithelial cells and brush border cells in duodenum, jejunum and ileum (PubMed:26446290). Detected on myelinated white matter in the cerebellum, and the myelinated part of the optic nerve. Detected on mature oligodendrocites. Detected on the outside of the myelin sheet that surrounds axons (at protein level) (PubMed:24903835). Ubiquitous. Highest levels in adult brain, and spinal cord. Moderate levels in lung, kidney, liver and spleen. Low levels in testis and heart (at protein level).</text>
</comment>
<comment type="developmental stage">
    <text evidence="9 12">Not detected in brain one week after birth, prior to the onset of myelination, and levels are low two weeks after birth. Expressed at high and constant levels in brain after three weeks and later (at protein level) (PubMed:24903835). Expression is developmentally regulated during brain ontogeny, rising 2-3 week postnatally, and is maximal in adult brain (PubMed:24903835, PubMed:8034741).</text>
</comment>
<comment type="domain">
    <text evidence="7 8 12">Binds a calmodulin chain via each of the two IQ domains (PubMed:12719468, PubMed:15853803). IQ domain 1 mediates interaction with calmodulin both in the presence and in the absence of Ca(2+). IQ domain 2 mediates interaction with calmodulin in the presence of Ca(2+) (PubMed:15853803, PubMed:8034741).</text>
</comment>
<comment type="domain">
    <text evidence="11">The TH1 domain is required for activity in complementing zebrafish defects in Kupffer's vesicle lumen size.</text>
</comment>
<comment type="disruption phenotype">
    <text evidence="10">Mutants display no defects in body left-right asymmetry, no obvious motor defects, and normal kidney and liver morphology. Tracheal epithelial cells display aberrant ciliary bending angles and disordered ciliary bending patterns. Likewise, planar cell polarity is disrupted in ependymal epithelial cells.</text>
</comment>
<comment type="similarity">
    <text evidence="15">Belongs to the TRAFAC class myosin-kinesin ATPase superfamily. Myosin family.</text>
</comment>
<comment type="caution">
    <text evidence="10">Contrary to the situation in zebrafish, xenopus and drosophila, rat Myo1d defects have no effects on left-right body asymmetry.</text>
</comment>
<comment type="caution">
    <text evidence="15">Represents an unconventional myosin. This protein should not be confused with the conventional myosin-1 (MYH1).</text>
</comment>
<protein>
    <recommendedName>
        <fullName evidence="13">Unconventional myosin-Id</fullName>
    </recommendedName>
    <alternativeName>
        <fullName>Myosin heavy chain myr 4</fullName>
    </alternativeName>
</protein>
<gene>
    <name type="primary">Myo1d</name>
    <name evidence="14" type="synonym">Myr4</name>
</gene>